<comment type="function">
    <text evidence="1">Catalyzes the transfer of the gamma-phosphate of ATP to D-galactose to form alpha-D-galactose-1-phosphate (Gal-1-P).</text>
</comment>
<comment type="catalytic activity">
    <reaction evidence="1">
        <text>alpha-D-galactose + ATP = alpha-D-galactose 1-phosphate + ADP + H(+)</text>
        <dbReference type="Rhea" id="RHEA:13553"/>
        <dbReference type="ChEBI" id="CHEBI:15378"/>
        <dbReference type="ChEBI" id="CHEBI:28061"/>
        <dbReference type="ChEBI" id="CHEBI:30616"/>
        <dbReference type="ChEBI" id="CHEBI:58336"/>
        <dbReference type="ChEBI" id="CHEBI:456216"/>
        <dbReference type="EC" id="2.7.1.6"/>
    </reaction>
</comment>
<comment type="pathway">
    <text evidence="1">Carbohydrate metabolism; galactose metabolism.</text>
</comment>
<comment type="subcellular location">
    <subcellularLocation>
        <location evidence="1">Cytoplasm</location>
    </subcellularLocation>
</comment>
<comment type="similarity">
    <text evidence="1">Belongs to the GHMP kinase family. GalK subfamily.</text>
</comment>
<proteinExistence type="inferred from homology"/>
<protein>
    <recommendedName>
        <fullName evidence="1">Galactokinase</fullName>
        <ecNumber evidence="1">2.7.1.6</ecNumber>
    </recommendedName>
    <alternativeName>
        <fullName evidence="1">Galactose kinase</fullName>
    </alternativeName>
</protein>
<reference key="1">
    <citation type="journal article" date="2009" name="J. Bacteriol.">
        <title>The genome of Thermosipho africanus TCF52B: lateral genetic connections to the Firmicutes and Archaea.</title>
        <authorList>
            <person name="Nesboe C.L."/>
            <person name="Bapteste E."/>
            <person name="Curtis B."/>
            <person name="Dahle H."/>
            <person name="Lopez P."/>
            <person name="Macleod D."/>
            <person name="Dlutek M."/>
            <person name="Bowman S."/>
            <person name="Zhaxybayeva O."/>
            <person name="Birkeland N.-K."/>
            <person name="Doolittle W.F."/>
        </authorList>
    </citation>
    <scope>NUCLEOTIDE SEQUENCE [LARGE SCALE GENOMIC DNA]</scope>
    <source>
        <strain>TCF52B</strain>
    </source>
</reference>
<name>GAL1_THEAB</name>
<organism>
    <name type="scientific">Thermosipho africanus (strain TCF52B)</name>
    <dbReference type="NCBI Taxonomy" id="484019"/>
    <lineage>
        <taxon>Bacteria</taxon>
        <taxon>Thermotogati</taxon>
        <taxon>Thermotogota</taxon>
        <taxon>Thermotogae</taxon>
        <taxon>Thermotogales</taxon>
        <taxon>Fervidobacteriaceae</taxon>
        <taxon>Thermosipho</taxon>
    </lineage>
</organism>
<feature type="chain" id="PRO_1000190065" description="Galactokinase">
    <location>
        <begin position="1"/>
        <end position="352"/>
    </location>
</feature>
<feature type="active site" description="Proton acceptor" evidence="1">
    <location>
        <position position="146"/>
    </location>
</feature>
<feature type="binding site" evidence="1">
    <location>
        <begin position="14"/>
        <end position="17"/>
    </location>
    <ligand>
        <name>substrate</name>
    </ligand>
</feature>
<feature type="binding site" evidence="1">
    <location>
        <position position="46"/>
    </location>
    <ligand>
        <name>ATP</name>
        <dbReference type="ChEBI" id="CHEBI:30616"/>
    </ligand>
</feature>
<feature type="binding site" evidence="1">
    <location>
        <begin position="96"/>
        <end position="102"/>
    </location>
    <ligand>
        <name>ATP</name>
        <dbReference type="ChEBI" id="CHEBI:30616"/>
    </ligand>
</feature>
<feature type="binding site" evidence="1">
    <location>
        <position position="102"/>
    </location>
    <ligand>
        <name>Mg(2+)</name>
        <dbReference type="ChEBI" id="CHEBI:18420"/>
    </ligand>
</feature>
<feature type="binding site" evidence="1">
    <location>
        <position position="134"/>
    </location>
    <ligand>
        <name>Mg(2+)</name>
        <dbReference type="ChEBI" id="CHEBI:18420"/>
    </ligand>
</feature>
<feature type="binding site" evidence="1">
    <location>
        <position position="196"/>
    </location>
    <ligand>
        <name>substrate</name>
    </ligand>
</feature>
<feature type="site" description="Transition state stabilizer" evidence="1">
    <location>
        <position position="8"/>
    </location>
</feature>
<gene>
    <name evidence="1" type="primary">galK</name>
    <name type="ordered locus">THA_1581</name>
</gene>
<keyword id="KW-0067">ATP-binding</keyword>
<keyword id="KW-0119">Carbohydrate metabolism</keyword>
<keyword id="KW-0963">Cytoplasm</keyword>
<keyword id="KW-0299">Galactose metabolism</keyword>
<keyword id="KW-0418">Kinase</keyword>
<keyword id="KW-0460">Magnesium</keyword>
<keyword id="KW-0479">Metal-binding</keyword>
<keyword id="KW-0547">Nucleotide-binding</keyword>
<keyword id="KW-1185">Reference proteome</keyword>
<keyword id="KW-0808">Transferase</keyword>
<sequence length="352" mass="39824">MKVKAPGRVNLIGEHTDYNDGFVLPFAIDRYVELEIEESDKFCFYSNNLNEEVKLSSLQKTNSWADYIVGVIKEIEKRGYKIQPVKIKVDSNIPIGAGLSSSAALEVASAYAISEYFGLNLSKIDIVKISREAEANFVGVNCGIMDQFASAFSKKDYAIFLDTMTLDFQFVPLNLKGYEIFVIDSNVKHELSSSEYNLRRQECESALEIIGKDSFRNVTREDLKLLNGGTLLKRVQHILEENERVLKTVKALKENEIERIGEYLYQSHESLRYLYEVSCDETDFIVDFLKEKDGIIGARMVGGGFGGGVIVISKEGSFESIEKLLENEYYSRFGIRPTFYKLNSSDGVTKIK</sequence>
<accession>B7IDE2</accession>
<evidence type="ECO:0000255" key="1">
    <source>
        <dbReference type="HAMAP-Rule" id="MF_00246"/>
    </source>
</evidence>
<dbReference type="EC" id="2.7.1.6" evidence="1"/>
<dbReference type="EMBL" id="CP001185">
    <property type="protein sequence ID" value="ACJ76019.1"/>
    <property type="molecule type" value="Genomic_DNA"/>
</dbReference>
<dbReference type="RefSeq" id="WP_004102324.1">
    <property type="nucleotide sequence ID" value="NC_011653.1"/>
</dbReference>
<dbReference type="SMR" id="B7IDE2"/>
<dbReference type="STRING" id="484019.THA_1581"/>
<dbReference type="KEGG" id="taf:THA_1581"/>
<dbReference type="eggNOG" id="COG0153">
    <property type="taxonomic scope" value="Bacteria"/>
</dbReference>
<dbReference type="HOGENOM" id="CLU_017814_2_1_0"/>
<dbReference type="OrthoDB" id="250531at2"/>
<dbReference type="UniPathway" id="UPA00214"/>
<dbReference type="Proteomes" id="UP000002453">
    <property type="component" value="Chromosome"/>
</dbReference>
<dbReference type="GO" id="GO:0005829">
    <property type="term" value="C:cytosol"/>
    <property type="evidence" value="ECO:0007669"/>
    <property type="project" value="TreeGrafter"/>
</dbReference>
<dbReference type="GO" id="GO:0005524">
    <property type="term" value="F:ATP binding"/>
    <property type="evidence" value="ECO:0007669"/>
    <property type="project" value="UniProtKB-UniRule"/>
</dbReference>
<dbReference type="GO" id="GO:0004335">
    <property type="term" value="F:galactokinase activity"/>
    <property type="evidence" value="ECO:0007669"/>
    <property type="project" value="UniProtKB-UniRule"/>
</dbReference>
<dbReference type="GO" id="GO:0000287">
    <property type="term" value="F:magnesium ion binding"/>
    <property type="evidence" value="ECO:0007669"/>
    <property type="project" value="UniProtKB-UniRule"/>
</dbReference>
<dbReference type="GO" id="GO:0006012">
    <property type="term" value="P:galactose metabolic process"/>
    <property type="evidence" value="ECO:0007669"/>
    <property type="project" value="UniProtKB-UniRule"/>
</dbReference>
<dbReference type="FunFam" id="3.30.230.10:FF:000126">
    <property type="entry name" value="Galactokinase"/>
    <property type="match status" value="1"/>
</dbReference>
<dbReference type="FunFam" id="3.30.70.890:FF:000001">
    <property type="entry name" value="Galactokinase"/>
    <property type="match status" value="1"/>
</dbReference>
<dbReference type="Gene3D" id="3.30.230.10">
    <property type="match status" value="1"/>
</dbReference>
<dbReference type="Gene3D" id="3.30.70.890">
    <property type="entry name" value="GHMP kinase, C-terminal domain"/>
    <property type="match status" value="1"/>
</dbReference>
<dbReference type="HAMAP" id="MF_00246">
    <property type="entry name" value="Galactokinase"/>
    <property type="match status" value="1"/>
</dbReference>
<dbReference type="InterPro" id="IPR000705">
    <property type="entry name" value="Galactokinase"/>
</dbReference>
<dbReference type="InterPro" id="IPR022963">
    <property type="entry name" value="Galactokinase_bac"/>
</dbReference>
<dbReference type="InterPro" id="IPR019741">
    <property type="entry name" value="Galactokinase_CS"/>
</dbReference>
<dbReference type="InterPro" id="IPR019539">
    <property type="entry name" value="GalKase_N"/>
</dbReference>
<dbReference type="InterPro" id="IPR013750">
    <property type="entry name" value="GHMP_kinase_C_dom"/>
</dbReference>
<dbReference type="InterPro" id="IPR036554">
    <property type="entry name" value="GHMP_kinase_C_sf"/>
</dbReference>
<dbReference type="InterPro" id="IPR006204">
    <property type="entry name" value="GHMP_kinase_N_dom"/>
</dbReference>
<dbReference type="InterPro" id="IPR006203">
    <property type="entry name" value="GHMP_knse_ATP-bd_CS"/>
</dbReference>
<dbReference type="InterPro" id="IPR006206">
    <property type="entry name" value="Mevalonate/galactokinase"/>
</dbReference>
<dbReference type="InterPro" id="IPR020568">
    <property type="entry name" value="Ribosomal_Su5_D2-typ_SF"/>
</dbReference>
<dbReference type="InterPro" id="IPR014721">
    <property type="entry name" value="Ribsml_uS5_D2-typ_fold_subgr"/>
</dbReference>
<dbReference type="NCBIfam" id="TIGR00131">
    <property type="entry name" value="gal_kin"/>
    <property type="match status" value="1"/>
</dbReference>
<dbReference type="NCBIfam" id="NF003006">
    <property type="entry name" value="PRK03817.1"/>
    <property type="match status" value="1"/>
</dbReference>
<dbReference type="PANTHER" id="PTHR10457:SF7">
    <property type="entry name" value="GALACTOKINASE-RELATED"/>
    <property type="match status" value="1"/>
</dbReference>
<dbReference type="PANTHER" id="PTHR10457">
    <property type="entry name" value="MEVALONATE KINASE/GALACTOKINASE"/>
    <property type="match status" value="1"/>
</dbReference>
<dbReference type="Pfam" id="PF10509">
    <property type="entry name" value="GalKase_gal_bdg"/>
    <property type="match status" value="1"/>
</dbReference>
<dbReference type="Pfam" id="PF08544">
    <property type="entry name" value="GHMP_kinases_C"/>
    <property type="match status" value="1"/>
</dbReference>
<dbReference type="Pfam" id="PF00288">
    <property type="entry name" value="GHMP_kinases_N"/>
    <property type="match status" value="1"/>
</dbReference>
<dbReference type="PIRSF" id="PIRSF000530">
    <property type="entry name" value="Galactokinase"/>
    <property type="match status" value="1"/>
</dbReference>
<dbReference type="PRINTS" id="PR00473">
    <property type="entry name" value="GALCTOKINASE"/>
</dbReference>
<dbReference type="PRINTS" id="PR00959">
    <property type="entry name" value="MEVGALKINASE"/>
</dbReference>
<dbReference type="SUPFAM" id="SSF55060">
    <property type="entry name" value="GHMP Kinase, C-terminal domain"/>
    <property type="match status" value="1"/>
</dbReference>
<dbReference type="SUPFAM" id="SSF54211">
    <property type="entry name" value="Ribosomal protein S5 domain 2-like"/>
    <property type="match status" value="1"/>
</dbReference>
<dbReference type="PROSITE" id="PS00106">
    <property type="entry name" value="GALACTOKINASE"/>
    <property type="match status" value="1"/>
</dbReference>
<dbReference type="PROSITE" id="PS00627">
    <property type="entry name" value="GHMP_KINASES_ATP"/>
    <property type="match status" value="1"/>
</dbReference>